<reference key="1">
    <citation type="journal article" date="2009" name="PLoS Biol.">
        <title>Lineage-specific biology revealed by a finished genome assembly of the mouse.</title>
        <authorList>
            <person name="Church D.M."/>
            <person name="Goodstadt L."/>
            <person name="Hillier L.W."/>
            <person name="Zody M.C."/>
            <person name="Goldstein S."/>
            <person name="She X."/>
            <person name="Bult C.J."/>
            <person name="Agarwala R."/>
            <person name="Cherry J.L."/>
            <person name="DiCuccio M."/>
            <person name="Hlavina W."/>
            <person name="Kapustin Y."/>
            <person name="Meric P."/>
            <person name="Maglott D."/>
            <person name="Birtle Z."/>
            <person name="Marques A.C."/>
            <person name="Graves T."/>
            <person name="Zhou S."/>
            <person name="Teague B."/>
            <person name="Potamousis K."/>
            <person name="Churas C."/>
            <person name="Place M."/>
            <person name="Herschleb J."/>
            <person name="Runnheim R."/>
            <person name="Forrest D."/>
            <person name="Amos-Landgraf J."/>
            <person name="Schwartz D.C."/>
            <person name="Cheng Z."/>
            <person name="Lindblad-Toh K."/>
            <person name="Eichler E.E."/>
            <person name="Ponting C.P."/>
        </authorList>
    </citation>
    <scope>NUCLEOTIDE SEQUENCE [LARGE SCALE GENOMIC DNA]</scope>
    <source>
        <strain>C57BL/6J</strain>
    </source>
</reference>
<reference key="2">
    <citation type="journal article" date="2005" name="Science">
        <title>The transcriptional landscape of the mammalian genome.</title>
        <authorList>
            <person name="Carninci P."/>
            <person name="Kasukawa T."/>
            <person name="Katayama S."/>
            <person name="Gough J."/>
            <person name="Frith M.C."/>
            <person name="Maeda N."/>
            <person name="Oyama R."/>
            <person name="Ravasi T."/>
            <person name="Lenhard B."/>
            <person name="Wells C."/>
            <person name="Kodzius R."/>
            <person name="Shimokawa K."/>
            <person name="Bajic V.B."/>
            <person name="Brenner S.E."/>
            <person name="Batalov S."/>
            <person name="Forrest A.R."/>
            <person name="Zavolan M."/>
            <person name="Davis M.J."/>
            <person name="Wilming L.G."/>
            <person name="Aidinis V."/>
            <person name="Allen J.E."/>
            <person name="Ambesi-Impiombato A."/>
            <person name="Apweiler R."/>
            <person name="Aturaliya R.N."/>
            <person name="Bailey T.L."/>
            <person name="Bansal M."/>
            <person name="Baxter L."/>
            <person name="Beisel K.W."/>
            <person name="Bersano T."/>
            <person name="Bono H."/>
            <person name="Chalk A.M."/>
            <person name="Chiu K.P."/>
            <person name="Choudhary V."/>
            <person name="Christoffels A."/>
            <person name="Clutterbuck D.R."/>
            <person name="Crowe M.L."/>
            <person name="Dalla E."/>
            <person name="Dalrymple B.P."/>
            <person name="de Bono B."/>
            <person name="Della Gatta G."/>
            <person name="di Bernardo D."/>
            <person name="Down T."/>
            <person name="Engstrom P."/>
            <person name="Fagiolini M."/>
            <person name="Faulkner G."/>
            <person name="Fletcher C.F."/>
            <person name="Fukushima T."/>
            <person name="Furuno M."/>
            <person name="Futaki S."/>
            <person name="Gariboldi M."/>
            <person name="Georgii-Hemming P."/>
            <person name="Gingeras T.R."/>
            <person name="Gojobori T."/>
            <person name="Green R.E."/>
            <person name="Gustincich S."/>
            <person name="Harbers M."/>
            <person name="Hayashi Y."/>
            <person name="Hensch T.K."/>
            <person name="Hirokawa N."/>
            <person name="Hill D."/>
            <person name="Huminiecki L."/>
            <person name="Iacono M."/>
            <person name="Ikeo K."/>
            <person name="Iwama A."/>
            <person name="Ishikawa T."/>
            <person name="Jakt M."/>
            <person name="Kanapin A."/>
            <person name="Katoh M."/>
            <person name="Kawasawa Y."/>
            <person name="Kelso J."/>
            <person name="Kitamura H."/>
            <person name="Kitano H."/>
            <person name="Kollias G."/>
            <person name="Krishnan S.P."/>
            <person name="Kruger A."/>
            <person name="Kummerfeld S.K."/>
            <person name="Kurochkin I.V."/>
            <person name="Lareau L.F."/>
            <person name="Lazarevic D."/>
            <person name="Lipovich L."/>
            <person name="Liu J."/>
            <person name="Liuni S."/>
            <person name="McWilliam S."/>
            <person name="Madan Babu M."/>
            <person name="Madera M."/>
            <person name="Marchionni L."/>
            <person name="Matsuda H."/>
            <person name="Matsuzawa S."/>
            <person name="Miki H."/>
            <person name="Mignone F."/>
            <person name="Miyake S."/>
            <person name="Morris K."/>
            <person name="Mottagui-Tabar S."/>
            <person name="Mulder N."/>
            <person name="Nakano N."/>
            <person name="Nakauchi H."/>
            <person name="Ng P."/>
            <person name="Nilsson R."/>
            <person name="Nishiguchi S."/>
            <person name="Nishikawa S."/>
            <person name="Nori F."/>
            <person name="Ohara O."/>
            <person name="Okazaki Y."/>
            <person name="Orlando V."/>
            <person name="Pang K.C."/>
            <person name="Pavan W.J."/>
            <person name="Pavesi G."/>
            <person name="Pesole G."/>
            <person name="Petrovsky N."/>
            <person name="Piazza S."/>
            <person name="Reed J."/>
            <person name="Reid J.F."/>
            <person name="Ring B.Z."/>
            <person name="Ringwald M."/>
            <person name="Rost B."/>
            <person name="Ruan Y."/>
            <person name="Salzberg S.L."/>
            <person name="Sandelin A."/>
            <person name="Schneider C."/>
            <person name="Schoenbach C."/>
            <person name="Sekiguchi K."/>
            <person name="Semple C.A."/>
            <person name="Seno S."/>
            <person name="Sessa L."/>
            <person name="Sheng Y."/>
            <person name="Shibata Y."/>
            <person name="Shimada H."/>
            <person name="Shimada K."/>
            <person name="Silva D."/>
            <person name="Sinclair B."/>
            <person name="Sperling S."/>
            <person name="Stupka E."/>
            <person name="Sugiura K."/>
            <person name="Sultana R."/>
            <person name="Takenaka Y."/>
            <person name="Taki K."/>
            <person name="Tammoja K."/>
            <person name="Tan S.L."/>
            <person name="Tang S."/>
            <person name="Taylor M.S."/>
            <person name="Tegner J."/>
            <person name="Teichmann S.A."/>
            <person name="Ueda H.R."/>
            <person name="van Nimwegen E."/>
            <person name="Verardo R."/>
            <person name="Wei C.L."/>
            <person name="Yagi K."/>
            <person name="Yamanishi H."/>
            <person name="Zabarovsky E."/>
            <person name="Zhu S."/>
            <person name="Zimmer A."/>
            <person name="Hide W."/>
            <person name="Bult C."/>
            <person name="Grimmond S.M."/>
            <person name="Teasdale R.D."/>
            <person name="Liu E.T."/>
            <person name="Brusic V."/>
            <person name="Quackenbush J."/>
            <person name="Wahlestedt C."/>
            <person name="Mattick J.S."/>
            <person name="Hume D.A."/>
            <person name="Kai C."/>
            <person name="Sasaki D."/>
            <person name="Tomaru Y."/>
            <person name="Fukuda S."/>
            <person name="Kanamori-Katayama M."/>
            <person name="Suzuki M."/>
            <person name="Aoki J."/>
            <person name="Arakawa T."/>
            <person name="Iida J."/>
            <person name="Imamura K."/>
            <person name="Itoh M."/>
            <person name="Kato T."/>
            <person name="Kawaji H."/>
            <person name="Kawagashira N."/>
            <person name="Kawashima T."/>
            <person name="Kojima M."/>
            <person name="Kondo S."/>
            <person name="Konno H."/>
            <person name="Nakano K."/>
            <person name="Ninomiya N."/>
            <person name="Nishio T."/>
            <person name="Okada M."/>
            <person name="Plessy C."/>
            <person name="Shibata K."/>
            <person name="Shiraki T."/>
            <person name="Suzuki S."/>
            <person name="Tagami M."/>
            <person name="Waki K."/>
            <person name="Watahiki A."/>
            <person name="Okamura-Oho Y."/>
            <person name="Suzuki H."/>
            <person name="Kawai J."/>
            <person name="Hayashizaki Y."/>
        </authorList>
    </citation>
    <scope>NUCLEOTIDE SEQUENCE [LARGE SCALE MRNA] OF 1848-2542 (ISOFORM 1/2)</scope>
    <source>
        <strain>C57BL/6J</strain>
        <tissue>Embryo</tissue>
        <tissue>Skin</tissue>
        <tissue>Testis</tissue>
    </source>
</reference>
<reference key="3">
    <citation type="journal article" date="2004" name="Genome Res.">
        <title>The status, quality, and expansion of the NIH full-length cDNA project: the Mammalian Gene Collection (MGC).</title>
        <authorList>
            <consortium name="The MGC Project Team"/>
        </authorList>
    </citation>
    <scope>NUCLEOTIDE SEQUENCE [LARGE SCALE MRNA] OF 2144-2542 (ISOFORM 1/2)</scope>
    <source>
        <strain>C57BL/6J</strain>
        <strain>FVB/N</strain>
        <tissue>Brain</tissue>
        <tissue>Liver</tissue>
    </source>
</reference>
<reference key="4">
    <citation type="journal article" date="1999" name="Genomics">
        <title>The cloning and developmental expression of unconventional myosin IXA (MYO9A) a gene in the Bardet-Biedl syndrome (BBS4) region at chromosome 15q22-q23.</title>
        <authorList>
            <person name="Gorman S.W."/>
            <person name="Haider N.B."/>
            <person name="Grieshammer U."/>
            <person name="Swiderski R.E."/>
            <person name="Kim E."/>
            <person name="Welch J.W."/>
            <person name="Searby C."/>
            <person name="Leng S."/>
            <person name="Carmi R."/>
            <person name="Sheffield V.C."/>
            <person name="Duhl D.M."/>
        </authorList>
    </citation>
    <scope>TISSUE SPECIFICITY</scope>
    <scope>DEVELOPMENTAL STAGE</scope>
</reference>
<reference key="5">
    <citation type="journal article" date="2009" name="Mol. Biol. Cell">
        <title>Myosin IXa regulates epithelial differentiation and its deficiency results in hydrocephalus.</title>
        <authorList>
            <person name="Abouhamed M."/>
            <person name="Grobe K."/>
            <person name="San I.V."/>
            <person name="Thelen S."/>
            <person name="Honnert U."/>
            <person name="Balda M.S."/>
            <person name="Matter K."/>
            <person name="Baehler M."/>
        </authorList>
    </citation>
    <scope>DISRUPTION PHENOTYPE</scope>
    <scope>TISSUE SPECIFICITY</scope>
</reference>
<reference key="6">
    <citation type="journal article" date="2010" name="Cell">
        <title>A tissue-specific atlas of mouse protein phosphorylation and expression.</title>
        <authorList>
            <person name="Huttlin E.L."/>
            <person name="Jedrychowski M.P."/>
            <person name="Elias J.E."/>
            <person name="Goswami T."/>
            <person name="Rad R."/>
            <person name="Beausoleil S.A."/>
            <person name="Villen J."/>
            <person name="Haas W."/>
            <person name="Sowa M.E."/>
            <person name="Gygi S.P."/>
        </authorList>
    </citation>
    <scope>PHOSPHORYLATION [LARGE SCALE ANALYSIS] AT SER-1243; THR-1245; SER-1950 AND SER-2293</scope>
    <scope>IDENTIFICATION BY MASS SPECTROMETRY [LARGE SCALE ANALYSIS]</scope>
    <source>
        <tissue>Brain</tissue>
        <tissue>Brown adipose tissue</tissue>
        <tissue>Heart</tissue>
        <tissue>Kidney</tissue>
        <tissue>Spleen</tissue>
        <tissue>Testis</tissue>
    </source>
</reference>
<reference key="7">
    <citation type="journal article" date="2016" name="Brain">
        <title>Identification of mutations in the MYO9A gene in patients with congenital myasthenic syndrome.</title>
        <authorList>
            <person name="O'Connor E."/>
            <person name="Toepf A."/>
            <person name="Mueller J.S."/>
            <person name="Cox D."/>
            <person name="Evangelista T."/>
            <person name="Colomer J."/>
            <person name="Abicht A."/>
            <person name="Senderek J."/>
            <person name="Hasselmann O."/>
            <person name="Yaramis A."/>
            <person name="Laval S.H."/>
            <person name="Lochmueller H."/>
        </authorList>
    </citation>
    <scope>FUNCTION</scope>
    <scope>SUBCELLULAR LOCATION</scope>
</reference>
<evidence type="ECO:0000250" key="1"/>
<evidence type="ECO:0000250" key="2">
    <source>
        <dbReference type="UniProtKB" id="B2RTY4"/>
    </source>
</evidence>
<evidence type="ECO:0000250" key="3">
    <source>
        <dbReference type="UniProtKB" id="Q9Z1N3"/>
    </source>
</evidence>
<evidence type="ECO:0000255" key="4"/>
<evidence type="ECO:0000255" key="5">
    <source>
        <dbReference type="PROSITE-ProRule" id="PRU00116"/>
    </source>
</evidence>
<evidence type="ECO:0000255" key="6">
    <source>
        <dbReference type="PROSITE-ProRule" id="PRU00166"/>
    </source>
</evidence>
<evidence type="ECO:0000255" key="7">
    <source>
        <dbReference type="PROSITE-ProRule" id="PRU00172"/>
    </source>
</evidence>
<evidence type="ECO:0000255" key="8">
    <source>
        <dbReference type="PROSITE-ProRule" id="PRU00226"/>
    </source>
</evidence>
<evidence type="ECO:0000255" key="9">
    <source>
        <dbReference type="PROSITE-ProRule" id="PRU00782"/>
    </source>
</evidence>
<evidence type="ECO:0000256" key="10">
    <source>
        <dbReference type="SAM" id="MobiDB-lite"/>
    </source>
</evidence>
<evidence type="ECO:0000269" key="11">
    <source>
    </source>
</evidence>
<evidence type="ECO:0000269" key="12">
    <source>
    </source>
</evidence>
<evidence type="ECO:0000269" key="13">
    <source>
    </source>
</evidence>
<evidence type="ECO:0000305" key="14"/>
<evidence type="ECO:0007744" key="15">
    <source>
    </source>
</evidence>
<proteinExistence type="evidence at protein level"/>
<feature type="chain" id="PRO_0000348441" description="Unconventional myosin-IXa">
    <location>
        <begin position="1"/>
        <end position="2542"/>
    </location>
</feature>
<feature type="transmembrane region" description="Helical" evidence="4">
    <location>
        <begin position="175"/>
        <end position="195"/>
    </location>
</feature>
<feature type="domain" description="Ras-associating" evidence="6">
    <location>
        <begin position="14"/>
        <end position="112"/>
    </location>
</feature>
<feature type="domain" description="Myosin motor" evidence="9">
    <location>
        <begin position="146"/>
        <end position="1017"/>
    </location>
</feature>
<feature type="domain" description="IQ 1" evidence="5">
    <location>
        <begin position="1021"/>
        <end position="1041"/>
    </location>
</feature>
<feature type="domain" description="IQ 2" evidence="5">
    <location>
        <begin position="1043"/>
        <end position="1072"/>
    </location>
</feature>
<feature type="domain" description="IQ 3" evidence="5">
    <location>
        <begin position="1075"/>
        <end position="1104"/>
    </location>
</feature>
<feature type="domain" description="IQ 4" evidence="5">
    <location>
        <begin position="1116"/>
        <end position="1145"/>
    </location>
</feature>
<feature type="domain" description="IQ 5" evidence="5">
    <location>
        <begin position="1139"/>
        <end position="1168"/>
    </location>
</feature>
<feature type="domain" description="Rho-GAP" evidence="7">
    <location>
        <begin position="2065"/>
        <end position="2253"/>
    </location>
</feature>
<feature type="zinc finger region" description="Phorbol-ester/DAG-type 1" evidence="8">
    <location>
        <begin position="2001"/>
        <end position="2050"/>
    </location>
</feature>
<feature type="zinc finger region" description="Phorbol-ester/DAG-type 2" evidence="8">
    <location>
        <begin position="2068"/>
        <end position="2119"/>
    </location>
</feature>
<feature type="region of interest" description="Actin-binding" evidence="1">
    <location>
        <begin position="908"/>
        <end position="919"/>
    </location>
</feature>
<feature type="region of interest" description="Neck or regulatory domain" evidence="1">
    <location>
        <begin position="1022"/>
        <end position="1163"/>
    </location>
</feature>
<feature type="region of interest" description="Tail" evidence="1">
    <location>
        <begin position="1164"/>
        <end position="2505"/>
    </location>
</feature>
<feature type="region of interest" description="Disordered" evidence="10">
    <location>
        <begin position="1221"/>
        <end position="1276"/>
    </location>
</feature>
<feature type="region of interest" description="Disordered" evidence="10">
    <location>
        <begin position="1342"/>
        <end position="1401"/>
    </location>
</feature>
<feature type="region of interest" description="Disordered" evidence="10">
    <location>
        <begin position="1650"/>
        <end position="1675"/>
    </location>
</feature>
<feature type="region of interest" description="Disordered" evidence="10">
    <location>
        <begin position="1693"/>
        <end position="1727"/>
    </location>
</feature>
<feature type="region of interest" description="Disordered" evidence="10">
    <location>
        <begin position="1767"/>
        <end position="1793"/>
    </location>
</feature>
<feature type="region of interest" description="Disordered" evidence="10">
    <location>
        <begin position="1806"/>
        <end position="1841"/>
    </location>
</feature>
<feature type="region of interest" description="Disordered" evidence="10">
    <location>
        <begin position="2361"/>
        <end position="2443"/>
    </location>
</feature>
<feature type="region of interest" description="Disordered" evidence="10">
    <location>
        <begin position="2465"/>
        <end position="2530"/>
    </location>
</feature>
<feature type="coiled-coil region" evidence="4">
    <location>
        <begin position="1265"/>
        <end position="1292"/>
    </location>
</feature>
<feature type="coiled-coil region" evidence="4">
    <location>
        <begin position="1492"/>
        <end position="1539"/>
    </location>
</feature>
<feature type="coiled-coil region" evidence="4">
    <location>
        <begin position="2324"/>
        <end position="2360"/>
    </location>
</feature>
<feature type="compositionally biased region" description="Basic and acidic residues" evidence="10">
    <location>
        <begin position="1221"/>
        <end position="1240"/>
    </location>
</feature>
<feature type="compositionally biased region" description="Basic residues" evidence="10">
    <location>
        <begin position="1266"/>
        <end position="1276"/>
    </location>
</feature>
<feature type="compositionally biased region" description="Polar residues" evidence="10">
    <location>
        <begin position="1358"/>
        <end position="1371"/>
    </location>
</feature>
<feature type="compositionally biased region" description="Low complexity" evidence="10">
    <location>
        <begin position="1372"/>
        <end position="1384"/>
    </location>
</feature>
<feature type="compositionally biased region" description="Basic and acidic residues" evidence="10">
    <location>
        <begin position="1391"/>
        <end position="1401"/>
    </location>
</feature>
<feature type="compositionally biased region" description="Basic and acidic residues" evidence="10">
    <location>
        <begin position="1665"/>
        <end position="1675"/>
    </location>
</feature>
<feature type="compositionally biased region" description="Polar residues" evidence="10">
    <location>
        <begin position="1715"/>
        <end position="1726"/>
    </location>
</feature>
<feature type="compositionally biased region" description="Basic and acidic residues" evidence="10">
    <location>
        <begin position="1821"/>
        <end position="1833"/>
    </location>
</feature>
<feature type="compositionally biased region" description="Polar residues" evidence="10">
    <location>
        <begin position="2377"/>
        <end position="2386"/>
    </location>
</feature>
<feature type="compositionally biased region" description="Low complexity" evidence="10">
    <location>
        <begin position="2420"/>
        <end position="2438"/>
    </location>
</feature>
<feature type="binding site" evidence="4">
    <location>
        <begin position="239"/>
        <end position="246"/>
    </location>
    <ligand>
        <name>ATP</name>
        <dbReference type="ChEBI" id="CHEBI:30616"/>
    </ligand>
</feature>
<feature type="site" description="Arginine finger; crucial for GTP hydrolysis by stabilizing the transition state" evidence="7">
    <location>
        <position position="2100"/>
    </location>
</feature>
<feature type="modified residue" description="Phosphoserine" evidence="3">
    <location>
        <position position="755"/>
    </location>
</feature>
<feature type="modified residue" description="Phosphoserine" evidence="15">
    <location>
        <position position="1243"/>
    </location>
</feature>
<feature type="modified residue" description="Phosphothreonine" evidence="15">
    <location>
        <position position="1245"/>
    </location>
</feature>
<feature type="modified residue" description="Phosphoserine" evidence="3">
    <location>
        <position position="1259"/>
    </location>
</feature>
<feature type="modified residue" description="Phosphoserine" evidence="2">
    <location>
        <position position="1300"/>
    </location>
</feature>
<feature type="modified residue" description="Phosphoserine" evidence="2">
    <location>
        <position position="1318"/>
    </location>
</feature>
<feature type="modified residue" description="Phosphoserine" evidence="15">
    <location>
        <position position="1950"/>
    </location>
</feature>
<feature type="modified residue" description="Phosphoserine" evidence="15">
    <location>
        <position position="2293"/>
    </location>
</feature>
<feature type="modified residue" description="Phosphoserine" evidence="2">
    <location>
        <position position="2296"/>
    </location>
</feature>
<feature type="modified residue" description="Phosphoserine" evidence="2">
    <location>
        <position position="2458"/>
    </location>
</feature>
<feature type="splice variant" id="VSP_035161" description="In isoform 2." evidence="14">
    <original>E</original>
    <variation>EVARPAHKKKARMARTRSDFLTRGTFAEGEGDTEEDDYDDIIEPLLSLDQASHSELGPVSSLGQASHSDSEM</variation>
    <location>
        <position position="1717"/>
    </location>
</feature>
<feature type="sequence conflict" description="In Ref. 3; AAH96035." evidence="14" ref="3">
    <original>N</original>
    <variation>Y</variation>
    <location>
        <position position="2434"/>
    </location>
</feature>
<name>MYO9A_MOUSE</name>
<organism>
    <name type="scientific">Mus musculus</name>
    <name type="common">Mouse</name>
    <dbReference type="NCBI Taxonomy" id="10090"/>
    <lineage>
        <taxon>Eukaryota</taxon>
        <taxon>Metazoa</taxon>
        <taxon>Chordata</taxon>
        <taxon>Craniata</taxon>
        <taxon>Vertebrata</taxon>
        <taxon>Euteleostomi</taxon>
        <taxon>Mammalia</taxon>
        <taxon>Eutheria</taxon>
        <taxon>Euarchontoglires</taxon>
        <taxon>Glires</taxon>
        <taxon>Rodentia</taxon>
        <taxon>Myomorpha</taxon>
        <taxon>Muroidea</taxon>
        <taxon>Muridae</taxon>
        <taxon>Murinae</taxon>
        <taxon>Mus</taxon>
        <taxon>Mus</taxon>
    </lineage>
</organism>
<gene>
    <name type="primary">Myo9a</name>
    <name type="synonym">Myr7</name>
</gene>
<sequence>MNVSDGGRRRFEDNEHTLRIYPGTISEGTIYCPIPARKNSTAAEVIDSLINRLHLDKTKCYVLAEVKEFGGEEWILNPTDCPVQRMMLWPRMALENRLSGEDYRFLLREKNLDGSIHYGSLQSWLRVTEERRRMMERGFLPQPQQKDFDDLCSLPDLNEKTLLENLRNRFKHEKIYTYVGSILIAINPFKFLPIYNPKYVKMYDNHQLGKLEPHIYAVADVAYHAMLQRKKNQCIVISGESGSGKTQSTNFLIHHLTALSQKGFASGVEQIILGAGPVLEAFGNAKTAHNNNSSRFGKFIQVNYQETGTVLGAYVEKYLLEKSRLVYQEHNERNYHVFYYLLAGASEEERLAFHLKQPEEYHFLNQITKKPLRQSWDDYCYDSEPDCFTVEGEDLRHDFERLQLAMEMVGFLPKTRRQIFSLLSAILHLGNISYKKKTYRDDSIDICNPEVLPIVSELLEVKEEMLFEALVTRKTVTVGEKLILPYKLAEAVTVRNSMAKSLYSALFDWIVFRINHALLNSKDLEQDTKTLSIGVLDIFGFEDYENNSFEQFCINFANERLQHYFNQHIFKLEQEEYRTEGISWHNIDYIDNTCCINLISKKPTGLLHLLDEESNFPQATNQTLLDKFKHQHEENSYIEFPAVMEPAFIIKHYAGKVKYGVKDFREKNTDHMRPDIVALLRSSRNAFVSGMTGIDPVAVFRWAVLRAFFRAVVAFREAGKRHIQRKSGHDDTTPCAILKSMDSFSFLQHPVHQRSLEILQRCKEEKYSITRKNPRTPLSDLQGMNTLNEKNQHDTFDIAWNVRTGIRQSRLPASNTSLLDKDGIFAHSASSKLLERAHGILTRNKNFRSKPVLPKHLLEVNSLKHLTRLTLQDRITKSLLHLHKKKKPPSISAQFQASLSKLMETLGQAEPYFVKCIRSNAEKLPLRFSDALVLRQLRYTGMLETVRIRQSGYSSKYSFQDFVSHFHVLLPQHIIPSKFNIQDFFRKININSDNYQVGKTMVFLKEHERQHLQDLLHQEVLRRIVLLQRWFRVLLSRQQFLHLRQASIIIQRFWRNYLNQKQVRNAAVEKDAFIMASAASLLQASWRAHLERQRYLELRAAAVIIQQRWRELYRCRHKAATCIQSRWRGYRQRKKYKEQRNKIILLQSIYRGFRARQRCNALKEEKLREAKLEHGLVHVKACGPLEIQGSDPSEWEDRSFDNRVKAIEECKYVIESNRISRESSMDFSKESPDKQQERGRRQSGTDLQEDVIVRQRPKSLEDLHQKKVGRAKRESRRMRELEQAIFSLELLKVRSLGGMSPSEERRWSTELMPEGLQSPHGTPDSESSQGSLELLTCDENQKSKPESLILDEGELKISSPNTFTNPKSQDNALSASSETSSTLAGKGASSDSEHLKNGTAKEKLVCSSEPITCKPQLRDSFVSSSLPTFFYIPHQEALKTSSHLDTSIQRNKLPEREAILKTTLTQDINREARKCQFSGDQMTPLNTDSSCTVLKKLEKLNIEKEKRQKQLQQQNEKEMMEQIRQQTDILEKERKAFKTIEQSRTEASVLAPSFYQPRQKVERPCSLYIQNTPSKGEAGVLGSPSAVTKRDAALATKDSPSIHLPPKDRPVTLFFEKKGSPCQSRTVKELPKTERTGTQHDAAYKLSNNRSTERDHFKSTHFYSHRSDDPSREGSSRAIFFTPKDNITPLVHSGNPQAHKQDESAWKPKLAGPGQQETSQRFSSVDEQAKLHKAMSQGEITKLAVRQKASDLDIRPQRAKMRFWAKGKQGEKKTTRVKPASQSEISSFFPGPDVTPAHPFSDELTQYHPTPPLSPELPGSCRKEFKENKEPSPKAKRKRGVKISSVALDSMHWQNDSVQIIASASDLKSMDEFLLKKMNDLDNEDSKKDTLVDVVFKKALKEFRQNIFSSYSSALAMDDGKSIRYKDLYALFEQILEKTMRLEQRDWNESPVRVWVNTFKVFLDEYMNEFKTLDSTAPKVLKTERKKRRKKETDLVEEHNGHIFKATQYSIPTYCEYCSSLIWIMDRASVCKLCKYACHKKCCLKTTAKCSKKYDPELSSRQFGVELSRLTSEDRAVPLVVEKLINYIEMHGLYTEGIYRKSGSTNKIKELRQGLDTDAESVNLDDYNIHVIASVFKQWLRDLPNPLMTFELYEEFLRAMGLQERKETIRGVYSVIDQLSRTHLNTLERLIFHLVRIALQEDTNRMSANALAIVFAPCILRCPDTTDPLQSVQDISKTTTCVELIVVEQMNKYKARLKDISSLEFAENKAKTRLSLIRRSMGKGRIHRGNYPSPSSPVIVRLPSMSDVPEETLSSETAMETDLTDQQQAAMQQEEKVLTEQIENLQKEKEELTFEMLVLEPRASDDETLESEASIGTADSSENLNMDSEERSLALSSLKAAGKSEPSSKSRKQLRKQPDSLDSVSSSVSSCLSNTTSSHGTRKRFQIYSKSPFYRAASACEAQGTEGPLGQAKSLEDRPQFISRGTFNPEKGKQKLKNVKNSPQKTKETPEGTVTSGRKKTVDSDCSSTQQLPLFGNNEFMV</sequence>
<dbReference type="EMBL" id="AC156795">
    <property type="status" value="NOT_ANNOTATED_CDS"/>
    <property type="molecule type" value="Genomic_DNA"/>
</dbReference>
<dbReference type="EMBL" id="AC131749">
    <property type="status" value="NOT_ANNOTATED_CDS"/>
    <property type="molecule type" value="Genomic_DNA"/>
</dbReference>
<dbReference type="EMBL" id="AK028873">
    <property type="protein sequence ID" value="BAC26164.1"/>
    <property type="status" value="ALT_INIT"/>
    <property type="molecule type" value="mRNA"/>
</dbReference>
<dbReference type="EMBL" id="AK029836">
    <property type="protein sequence ID" value="BAC26639.1"/>
    <property type="molecule type" value="mRNA"/>
</dbReference>
<dbReference type="EMBL" id="AK162486">
    <property type="protein sequence ID" value="BAE36942.1"/>
    <property type="molecule type" value="mRNA"/>
</dbReference>
<dbReference type="EMBL" id="BC046526">
    <property type="protein sequence ID" value="AAH46526.1"/>
    <property type="molecule type" value="mRNA"/>
</dbReference>
<dbReference type="EMBL" id="BC096035">
    <property type="protein sequence ID" value="AAH96035.1"/>
    <property type="molecule type" value="mRNA"/>
</dbReference>
<dbReference type="RefSeq" id="XP_006511283.1">
    <molecule id="Q8C170-1"/>
    <property type="nucleotide sequence ID" value="XM_006511220.3"/>
</dbReference>
<dbReference type="SMR" id="Q8C170"/>
<dbReference type="BioGRID" id="234775">
    <property type="interactions" value="7"/>
</dbReference>
<dbReference type="FunCoup" id="Q8C170">
    <property type="interactions" value="1070"/>
</dbReference>
<dbReference type="IntAct" id="Q8C170">
    <property type="interactions" value="1"/>
</dbReference>
<dbReference type="STRING" id="10090.ENSMUSP00000122852"/>
<dbReference type="GlyGen" id="Q8C170">
    <property type="glycosylation" value="8 sites, 4 N-linked glycans (4 sites), 1 O-linked glycan (2 sites)"/>
</dbReference>
<dbReference type="iPTMnet" id="Q8C170"/>
<dbReference type="PhosphoSitePlus" id="Q8C170"/>
<dbReference type="jPOST" id="Q8C170"/>
<dbReference type="PaxDb" id="10090-ENSMUSP00000122852"/>
<dbReference type="ProteomicsDB" id="287592">
    <molecule id="Q8C170-1"/>
</dbReference>
<dbReference type="ProteomicsDB" id="287593">
    <molecule id="Q8C170-2"/>
</dbReference>
<dbReference type="Pumba" id="Q8C170"/>
<dbReference type="Antibodypedia" id="26536">
    <property type="antibodies" value="28 antibodies from 13 providers"/>
</dbReference>
<dbReference type="Ensembl" id="ENSMUST00000128341.2">
    <molecule id="Q8C170-1"/>
    <property type="protein sequence ID" value="ENSMUSP00000119401.2"/>
    <property type="gene ID" value="ENSMUSG00000039585.16"/>
</dbReference>
<dbReference type="Ensembl" id="ENSMUST00000135298.8">
    <molecule id="Q8C170-2"/>
    <property type="protein sequence ID" value="ENSMUSP00000117432.2"/>
    <property type="gene ID" value="ENSMUSG00000039585.16"/>
</dbReference>
<dbReference type="GeneID" id="270163"/>
<dbReference type="AGR" id="MGI:107735"/>
<dbReference type="CTD" id="4649"/>
<dbReference type="MGI" id="MGI:107735">
    <property type="gene designation" value="Myo9a"/>
</dbReference>
<dbReference type="VEuPathDB" id="HostDB:ENSMUSG00000039585"/>
<dbReference type="eggNOG" id="KOG1453">
    <property type="taxonomic scope" value="Eukaryota"/>
</dbReference>
<dbReference type="eggNOG" id="KOG4229">
    <property type="taxonomic scope" value="Eukaryota"/>
</dbReference>
<dbReference type="GeneTree" id="ENSGT00940000154905"/>
<dbReference type="HOGENOM" id="CLU_000192_2_1_1"/>
<dbReference type="InParanoid" id="Q8C170"/>
<dbReference type="OrthoDB" id="437889at2759"/>
<dbReference type="Reactome" id="R-MMU-8980692">
    <property type="pathway name" value="RHOA GTPase cycle"/>
</dbReference>
<dbReference type="Reactome" id="R-MMU-9013026">
    <property type="pathway name" value="RHOB GTPase cycle"/>
</dbReference>
<dbReference type="Reactome" id="R-MMU-9013424">
    <property type="pathway name" value="RHOV GTPase cycle"/>
</dbReference>
<dbReference type="BioGRID-ORCS" id="270163">
    <property type="hits" value="3 hits in 76 CRISPR screens"/>
</dbReference>
<dbReference type="ChiTaRS" id="Myo9a">
    <property type="organism name" value="mouse"/>
</dbReference>
<dbReference type="PRO" id="PR:Q8C170"/>
<dbReference type="Proteomes" id="UP000000589">
    <property type="component" value="Chromosome 9"/>
</dbReference>
<dbReference type="RNAct" id="Q8C170">
    <property type="molecule type" value="protein"/>
</dbReference>
<dbReference type="Bgee" id="ENSMUSG00000039585">
    <property type="expression patterns" value="Expressed in spermatocyte and 228 other cell types or tissues"/>
</dbReference>
<dbReference type="ExpressionAtlas" id="Q8C170">
    <property type="expression patterns" value="baseline and differential"/>
</dbReference>
<dbReference type="GO" id="GO:0044295">
    <property type="term" value="C:axonal growth cone"/>
    <property type="evidence" value="ECO:0000314"/>
    <property type="project" value="UniProtKB"/>
</dbReference>
<dbReference type="GO" id="GO:0005737">
    <property type="term" value="C:cytoplasm"/>
    <property type="evidence" value="ECO:0007669"/>
    <property type="project" value="UniProtKB-SubCell"/>
</dbReference>
<dbReference type="GO" id="GO:0016020">
    <property type="term" value="C:membrane"/>
    <property type="evidence" value="ECO:0007669"/>
    <property type="project" value="UniProtKB-SubCell"/>
</dbReference>
<dbReference type="GO" id="GO:0016459">
    <property type="term" value="C:myosin complex"/>
    <property type="evidence" value="ECO:0007669"/>
    <property type="project" value="UniProtKB-KW"/>
</dbReference>
<dbReference type="GO" id="GO:0098685">
    <property type="term" value="C:Schaffer collateral - CA1 synapse"/>
    <property type="evidence" value="ECO:0000314"/>
    <property type="project" value="SynGO"/>
</dbReference>
<dbReference type="GO" id="GO:0003779">
    <property type="term" value="F:actin binding"/>
    <property type="evidence" value="ECO:0007669"/>
    <property type="project" value="UniProtKB-KW"/>
</dbReference>
<dbReference type="GO" id="GO:0005524">
    <property type="term" value="F:ATP binding"/>
    <property type="evidence" value="ECO:0007669"/>
    <property type="project" value="UniProtKB-KW"/>
</dbReference>
<dbReference type="GO" id="GO:0005096">
    <property type="term" value="F:GTPase activator activity"/>
    <property type="evidence" value="ECO:0007669"/>
    <property type="project" value="UniProtKB-KW"/>
</dbReference>
<dbReference type="GO" id="GO:0000146">
    <property type="term" value="F:microfilament motor activity"/>
    <property type="evidence" value="ECO:0007669"/>
    <property type="project" value="InterPro"/>
</dbReference>
<dbReference type="GO" id="GO:0008270">
    <property type="term" value="F:zinc ion binding"/>
    <property type="evidence" value="ECO:0007669"/>
    <property type="project" value="UniProtKB-KW"/>
</dbReference>
<dbReference type="GO" id="GO:0034329">
    <property type="term" value="P:cell junction assembly"/>
    <property type="evidence" value="ECO:0000250"/>
    <property type="project" value="UniProtKB"/>
</dbReference>
<dbReference type="GO" id="GO:0045198">
    <property type="term" value="P:establishment of epithelial cell apical/basal polarity"/>
    <property type="evidence" value="ECO:0000250"/>
    <property type="project" value="UniProtKB"/>
</dbReference>
<dbReference type="GO" id="GO:0035556">
    <property type="term" value="P:intracellular signal transduction"/>
    <property type="evidence" value="ECO:0007669"/>
    <property type="project" value="InterPro"/>
</dbReference>
<dbReference type="GO" id="GO:0099084">
    <property type="term" value="P:postsynaptic specialization organization"/>
    <property type="evidence" value="ECO:0000314"/>
    <property type="project" value="SynGO"/>
</dbReference>
<dbReference type="GO" id="GO:0150011">
    <property type="term" value="P:regulation of neuron projection arborization"/>
    <property type="evidence" value="ECO:0000315"/>
    <property type="project" value="UniProtKB"/>
</dbReference>
<dbReference type="CDD" id="cd20883">
    <property type="entry name" value="C1_Myosin-IXa"/>
    <property type="match status" value="1"/>
</dbReference>
<dbReference type="CDD" id="cd23767">
    <property type="entry name" value="IQCD"/>
    <property type="match status" value="1"/>
</dbReference>
<dbReference type="CDD" id="cd01385">
    <property type="entry name" value="MYSc_Myo9"/>
    <property type="match status" value="1"/>
</dbReference>
<dbReference type="CDD" id="cd17216">
    <property type="entry name" value="RA_Myosin-IXa"/>
    <property type="match status" value="1"/>
</dbReference>
<dbReference type="CDD" id="cd04377">
    <property type="entry name" value="RhoGAP_myosin_IX"/>
    <property type="match status" value="1"/>
</dbReference>
<dbReference type="FunFam" id="1.20.5.190:FF:000027">
    <property type="entry name" value="Myosin IXA"/>
    <property type="match status" value="1"/>
</dbReference>
<dbReference type="FunFam" id="1.20.5.190:FF:000018">
    <property type="entry name" value="Myosin XI D"/>
    <property type="match status" value="1"/>
</dbReference>
<dbReference type="FunFam" id="1.20.120.720:FF:000003">
    <property type="entry name" value="Putative unconventional myosin-IXa"/>
    <property type="match status" value="1"/>
</dbReference>
<dbReference type="FunFam" id="3.30.60.20:FF:000020">
    <property type="entry name" value="Putative unconventional myosin-IXa"/>
    <property type="match status" value="1"/>
</dbReference>
<dbReference type="FunFam" id="3.40.850.10:FF:000008">
    <property type="entry name" value="Putative unconventional myosin-IXa"/>
    <property type="match status" value="1"/>
</dbReference>
<dbReference type="FunFam" id="1.10.10.820:FF:000003">
    <property type="entry name" value="unconventional myosin-IXa isoform X1"/>
    <property type="match status" value="1"/>
</dbReference>
<dbReference type="FunFam" id="1.10.555.10:FF:000009">
    <property type="entry name" value="unconventional myosin-IXa isoform X1"/>
    <property type="match status" value="1"/>
</dbReference>
<dbReference type="FunFam" id="1.20.58.530:FF:000005">
    <property type="entry name" value="unconventional myosin-IXa isoform X1"/>
    <property type="match status" value="1"/>
</dbReference>
<dbReference type="FunFam" id="3.10.20.90:FF:000121">
    <property type="entry name" value="unconventional myosin-IXa isoform X1"/>
    <property type="match status" value="1"/>
</dbReference>
<dbReference type="FunFam" id="3.40.850.10:FF:000013">
    <property type="entry name" value="unconventional myosin-IXa isoform X1"/>
    <property type="match status" value="1"/>
</dbReference>
<dbReference type="FunFam" id="1.20.5.190:FF:000013">
    <property type="entry name" value="unconventional myosin-IXa isoform X2"/>
    <property type="match status" value="1"/>
</dbReference>
<dbReference type="FunFam" id="1.20.58.530:FF:000009">
    <property type="entry name" value="unconventional myosin-IXb isoform X1"/>
    <property type="match status" value="1"/>
</dbReference>
<dbReference type="Gene3D" id="1.10.10.820">
    <property type="match status" value="1"/>
</dbReference>
<dbReference type="Gene3D" id="1.20.5.190">
    <property type="match status" value="3"/>
</dbReference>
<dbReference type="Gene3D" id="1.20.58.530">
    <property type="match status" value="2"/>
</dbReference>
<dbReference type="Gene3D" id="3.30.60.20">
    <property type="match status" value="1"/>
</dbReference>
<dbReference type="Gene3D" id="6.20.240.20">
    <property type="match status" value="1"/>
</dbReference>
<dbReference type="Gene3D" id="3.40.850.10">
    <property type="entry name" value="Kinesin motor domain"/>
    <property type="match status" value="2"/>
</dbReference>
<dbReference type="Gene3D" id="1.20.120.720">
    <property type="entry name" value="Myosin VI head, motor domain, U50 subdomain"/>
    <property type="match status" value="1"/>
</dbReference>
<dbReference type="Gene3D" id="3.10.20.90">
    <property type="entry name" value="Phosphatidylinositol 3-kinase Catalytic Subunit, Chain A, domain 1"/>
    <property type="match status" value="1"/>
</dbReference>
<dbReference type="Gene3D" id="1.10.555.10">
    <property type="entry name" value="Rho GTPase activation protein"/>
    <property type="match status" value="1"/>
</dbReference>
<dbReference type="InterPro" id="IPR046349">
    <property type="entry name" value="C1-like_sf"/>
</dbReference>
<dbReference type="InterPro" id="IPR000048">
    <property type="entry name" value="IQ_motif_EF-hand-BS"/>
</dbReference>
<dbReference type="InterPro" id="IPR036961">
    <property type="entry name" value="Kinesin_motor_dom_sf"/>
</dbReference>
<dbReference type="InterPro" id="IPR046987">
    <property type="entry name" value="Myo9"/>
</dbReference>
<dbReference type="InterPro" id="IPR001609">
    <property type="entry name" value="Myosin_head_motor_dom-like"/>
</dbReference>
<dbReference type="InterPro" id="IPR036023">
    <property type="entry name" value="MYSc_Myo9"/>
</dbReference>
<dbReference type="InterPro" id="IPR027417">
    <property type="entry name" value="P-loop_NTPase"/>
</dbReference>
<dbReference type="InterPro" id="IPR002219">
    <property type="entry name" value="PE/DAG-bd"/>
</dbReference>
<dbReference type="InterPro" id="IPR000159">
    <property type="entry name" value="RA_dom"/>
</dbReference>
<dbReference type="InterPro" id="IPR028558">
    <property type="entry name" value="RA_Myosin-IXa"/>
</dbReference>
<dbReference type="InterPro" id="IPR008936">
    <property type="entry name" value="Rho_GTPase_activation_prot"/>
</dbReference>
<dbReference type="InterPro" id="IPR000198">
    <property type="entry name" value="RhoGAP_dom"/>
</dbReference>
<dbReference type="InterPro" id="IPR046990">
    <property type="entry name" value="RhoGAP_myosin_IX"/>
</dbReference>
<dbReference type="InterPro" id="IPR029071">
    <property type="entry name" value="Ubiquitin-like_domsf"/>
</dbReference>
<dbReference type="PANTHER" id="PTHR46184:SF3">
    <property type="entry name" value="UNCONVENTIONAL MYOSIN-IXA"/>
    <property type="match status" value="1"/>
</dbReference>
<dbReference type="PANTHER" id="PTHR46184">
    <property type="entry name" value="UNCONVENTIONAL MYOSIN-IXB-LIKE PROTEIN"/>
    <property type="match status" value="1"/>
</dbReference>
<dbReference type="Pfam" id="PF00130">
    <property type="entry name" value="C1_1"/>
    <property type="match status" value="1"/>
</dbReference>
<dbReference type="Pfam" id="PF00612">
    <property type="entry name" value="IQ"/>
    <property type="match status" value="4"/>
</dbReference>
<dbReference type="Pfam" id="PF00063">
    <property type="entry name" value="Myosin_head"/>
    <property type="match status" value="2"/>
</dbReference>
<dbReference type="Pfam" id="PF00788">
    <property type="entry name" value="RA"/>
    <property type="match status" value="1"/>
</dbReference>
<dbReference type="Pfam" id="PF00620">
    <property type="entry name" value="RhoGAP"/>
    <property type="match status" value="1"/>
</dbReference>
<dbReference type="PRINTS" id="PR00193">
    <property type="entry name" value="MYOSINHEAVY"/>
</dbReference>
<dbReference type="SMART" id="SM00109">
    <property type="entry name" value="C1"/>
    <property type="match status" value="1"/>
</dbReference>
<dbReference type="SMART" id="SM00015">
    <property type="entry name" value="IQ"/>
    <property type="match status" value="5"/>
</dbReference>
<dbReference type="SMART" id="SM00242">
    <property type="entry name" value="MYSc"/>
    <property type="match status" value="1"/>
</dbReference>
<dbReference type="SMART" id="SM00314">
    <property type="entry name" value="RA"/>
    <property type="match status" value="1"/>
</dbReference>
<dbReference type="SMART" id="SM00324">
    <property type="entry name" value="RhoGAP"/>
    <property type="match status" value="1"/>
</dbReference>
<dbReference type="SUPFAM" id="SSF57889">
    <property type="entry name" value="Cysteine-rich domain"/>
    <property type="match status" value="1"/>
</dbReference>
<dbReference type="SUPFAM" id="SSF48350">
    <property type="entry name" value="GTPase activation domain, GAP"/>
    <property type="match status" value="1"/>
</dbReference>
<dbReference type="SUPFAM" id="SSF52540">
    <property type="entry name" value="P-loop containing nucleoside triphosphate hydrolases"/>
    <property type="match status" value="2"/>
</dbReference>
<dbReference type="SUPFAM" id="SSF54236">
    <property type="entry name" value="Ubiquitin-like"/>
    <property type="match status" value="1"/>
</dbReference>
<dbReference type="PROSITE" id="PS50096">
    <property type="entry name" value="IQ"/>
    <property type="match status" value="4"/>
</dbReference>
<dbReference type="PROSITE" id="PS51456">
    <property type="entry name" value="MYOSIN_MOTOR"/>
    <property type="match status" value="1"/>
</dbReference>
<dbReference type="PROSITE" id="PS50200">
    <property type="entry name" value="RA"/>
    <property type="match status" value="1"/>
</dbReference>
<dbReference type="PROSITE" id="PS50238">
    <property type="entry name" value="RHOGAP"/>
    <property type="match status" value="1"/>
</dbReference>
<dbReference type="PROSITE" id="PS00479">
    <property type="entry name" value="ZF_DAG_PE_1"/>
    <property type="match status" value="1"/>
</dbReference>
<dbReference type="PROSITE" id="PS50081">
    <property type="entry name" value="ZF_DAG_PE_2"/>
    <property type="match status" value="1"/>
</dbReference>
<accession>Q8C170</accession>
<accession>Q3TRT5</accession>
<accession>Q4VBD3</accession>
<accession>Q80Y92</accession>
<accession>Q8C0U0</accession>
<comment type="function">
    <text evidence="3 13">Myosins are actin-based motor molecules with ATPase activity. Unconventional myosins serve in intracellular movements. Regulates Rho by stimulating it's GTPase activity in neurons. Required for the regulation of neurite branching and motor neuron axon guidance (PubMed:27259756).</text>
</comment>
<comment type="subcellular location">
    <subcellularLocation>
        <location evidence="4">Membrane</location>
        <topology evidence="4">Single-pass membrane protein</topology>
    </subcellularLocation>
    <subcellularLocation>
        <location evidence="3">Cytoplasm</location>
    </subcellularLocation>
    <subcellularLocation>
        <location evidence="13">Synapse</location>
    </subcellularLocation>
    <subcellularLocation>
        <location evidence="13">Cell projection</location>
        <location evidence="13">Growth cone</location>
    </subcellularLocation>
    <text evidence="3 13">Localized in the cytoplasm of cell bodies, dendrites and axons with occasional hints of an enrichment near the plasma membrane. Localized at the neuromuscular junction (PubMed:27259756).</text>
</comment>
<comment type="alternative products">
    <event type="alternative splicing"/>
    <isoform>
        <id>Q8C170-1</id>
        <name>1</name>
        <sequence type="displayed"/>
    </isoform>
    <isoform>
        <id>Q8C170-2</id>
        <name>2</name>
        <sequence type="described" ref="VSP_035161"/>
    </isoform>
</comment>
<comment type="tissue specificity">
    <text evidence="11 12">Expressed in the eye, lung, liver, brain, heart, kidney, skeletal muscle and spleen. No detection was found in liver. In the brain, expressed in the ependymal cells of the third ventricle and the aqueduct (PubMed:19828736).</text>
</comment>
<comment type="developmental stage">
    <text evidence="11">Detected in whole embryos at 7, 11, 15 and 17 dpc. Also present in limb buds from 13.5 dpc. At 16.5 dpc, it is expressed throughout the developing nervous system, eye, inner ear, kidney, thyroid gland and teeth.</text>
</comment>
<comment type="PTM">
    <text evidence="2">Phosphorylated by ALPK1 following monosodium urate monohydrate (MSU)-induced inflammation.</text>
</comment>
<comment type="disruption phenotype">
    <text evidence="12">Knockout mice display retarded growth, a dome-shaped skull, and develop severe hydrocephalus with stenosis and closure of the ventral caudal third ventricle and the aqueduct.</text>
</comment>
<comment type="similarity">
    <text evidence="14">Belongs to the TRAFAC class myosin-kinesin ATPase superfamily. Myosin family.</text>
</comment>
<comment type="caution">
    <text evidence="14">Represents an unconventional myosin. This protein should not be confused with the conventional myosin-9 (MYH9).</text>
</comment>
<comment type="sequence caution" evidence="14">
    <conflict type="erroneous initiation">
        <sequence resource="EMBL-CDS" id="BAC26164"/>
    </conflict>
</comment>
<protein>
    <recommendedName>
        <fullName>Unconventional myosin-IXa</fullName>
    </recommendedName>
    <alternativeName>
        <fullName>Unconventional myosin-9a</fullName>
    </alternativeName>
</protein>
<keyword id="KW-0009">Actin-binding</keyword>
<keyword id="KW-0025">Alternative splicing</keyword>
<keyword id="KW-0067">ATP-binding</keyword>
<keyword id="KW-0966">Cell projection</keyword>
<keyword id="KW-0175">Coiled coil</keyword>
<keyword id="KW-0963">Cytoplasm</keyword>
<keyword id="KW-0343">GTPase activation</keyword>
<keyword id="KW-0472">Membrane</keyword>
<keyword id="KW-0479">Metal-binding</keyword>
<keyword id="KW-0505">Motor protein</keyword>
<keyword id="KW-0518">Myosin</keyword>
<keyword id="KW-0547">Nucleotide-binding</keyword>
<keyword id="KW-0597">Phosphoprotein</keyword>
<keyword id="KW-1185">Reference proteome</keyword>
<keyword id="KW-0677">Repeat</keyword>
<keyword id="KW-0770">Synapse</keyword>
<keyword id="KW-0812">Transmembrane</keyword>
<keyword id="KW-1133">Transmembrane helix</keyword>
<keyword id="KW-0862">Zinc</keyword>
<keyword id="KW-0863">Zinc-finger</keyword>